<dbReference type="EMBL" id="CH954179">
    <property type="protein sequence ID" value="EDV54645.1"/>
    <property type="molecule type" value="Genomic_DNA"/>
</dbReference>
<dbReference type="SMR" id="B3NM45"/>
<dbReference type="EnsemblMetazoa" id="FBtr0141681">
    <property type="protein sequence ID" value="FBpp0140173"/>
    <property type="gene ID" value="FBgn0113805"/>
</dbReference>
<dbReference type="EnsemblMetazoa" id="XM_001974209.3">
    <property type="protein sequence ID" value="XP_001974245.1"/>
    <property type="gene ID" value="LOC6549283"/>
</dbReference>
<dbReference type="GeneID" id="6549283"/>
<dbReference type="KEGG" id="der:6549283"/>
<dbReference type="CTD" id="348180"/>
<dbReference type="eggNOG" id="KOG2594">
    <property type="taxonomic scope" value="Eukaryota"/>
</dbReference>
<dbReference type="HOGENOM" id="CLU_024534_2_1_1"/>
<dbReference type="OMA" id="CHACRNI"/>
<dbReference type="OrthoDB" id="25129at2759"/>
<dbReference type="PhylomeDB" id="B3NM45"/>
<dbReference type="UniPathway" id="UPA00988"/>
<dbReference type="Proteomes" id="UP000008711">
    <property type="component" value="Unassembled WGS sequence"/>
</dbReference>
<dbReference type="GO" id="GO:0005829">
    <property type="term" value="C:cytosol"/>
    <property type="evidence" value="ECO:0000250"/>
    <property type="project" value="UniProtKB"/>
</dbReference>
<dbReference type="GO" id="GO:0016779">
    <property type="term" value="F:nucleotidyltransferase activity"/>
    <property type="evidence" value="ECO:0007669"/>
    <property type="project" value="UniProtKB-UniRule"/>
</dbReference>
<dbReference type="GO" id="GO:0016783">
    <property type="term" value="F:sulfurtransferase activity"/>
    <property type="evidence" value="ECO:0007669"/>
    <property type="project" value="TreeGrafter"/>
</dbReference>
<dbReference type="GO" id="GO:0000049">
    <property type="term" value="F:tRNA binding"/>
    <property type="evidence" value="ECO:0007669"/>
    <property type="project" value="InterPro"/>
</dbReference>
<dbReference type="GO" id="GO:0032447">
    <property type="term" value="P:protein urmylation"/>
    <property type="evidence" value="ECO:0007669"/>
    <property type="project" value="UniProtKB-UniRule"/>
</dbReference>
<dbReference type="GO" id="GO:0034227">
    <property type="term" value="P:tRNA thio-modification"/>
    <property type="evidence" value="ECO:0000250"/>
    <property type="project" value="UniProtKB"/>
</dbReference>
<dbReference type="GO" id="GO:0002143">
    <property type="term" value="P:tRNA wobble position uridine thiolation"/>
    <property type="evidence" value="ECO:0007669"/>
    <property type="project" value="TreeGrafter"/>
</dbReference>
<dbReference type="GO" id="GO:0002098">
    <property type="term" value="P:tRNA wobble uridine modification"/>
    <property type="evidence" value="ECO:0000250"/>
    <property type="project" value="UniProtKB"/>
</dbReference>
<dbReference type="FunFam" id="3.40.50.620:FF:000229">
    <property type="entry name" value="Cytoplasmic tRNA 2-thiolation protein 2"/>
    <property type="match status" value="1"/>
</dbReference>
<dbReference type="Gene3D" id="3.40.50.620">
    <property type="entry name" value="HUPs"/>
    <property type="match status" value="1"/>
</dbReference>
<dbReference type="HAMAP" id="MF_03054">
    <property type="entry name" value="CTU2"/>
    <property type="match status" value="1"/>
</dbReference>
<dbReference type="InterPro" id="IPR019407">
    <property type="entry name" value="CTU2"/>
</dbReference>
<dbReference type="InterPro" id="IPR014729">
    <property type="entry name" value="Rossmann-like_a/b/a_fold"/>
</dbReference>
<dbReference type="PANTHER" id="PTHR20882">
    <property type="entry name" value="CYTOPLASMIC TRNA 2-THIOLATION PROTEIN 2"/>
    <property type="match status" value="1"/>
</dbReference>
<dbReference type="PANTHER" id="PTHR20882:SF14">
    <property type="entry name" value="CYTOPLASMIC TRNA 2-THIOLATION PROTEIN 2"/>
    <property type="match status" value="1"/>
</dbReference>
<dbReference type="Pfam" id="PF10288">
    <property type="entry name" value="CTU2"/>
    <property type="match status" value="1"/>
</dbReference>
<dbReference type="SUPFAM" id="SSF52402">
    <property type="entry name" value="Adenine nucleotide alpha hydrolases-like"/>
    <property type="match status" value="1"/>
</dbReference>
<name>CTU2_DROER</name>
<proteinExistence type="inferred from homology"/>
<gene>
    <name type="ORF">GG21627</name>
</gene>
<evidence type="ECO:0000255" key="1">
    <source>
        <dbReference type="HAMAP-Rule" id="MF_03054"/>
    </source>
</evidence>
<protein>
    <recommendedName>
        <fullName evidence="1">Cytoplasmic tRNA 2-thiolation protein 2</fullName>
    </recommendedName>
</protein>
<accession>B3NM45</accession>
<sequence>MCSIGEDDFGDEGAAHAMVVEALPLGIVLSPGNCSKCDVNSGELYKLNFRAAECRECFLTYARHKFRAALGAAKILPRNAEVLLVLDGSAKSLVLLDMLHFAQTQNQFKRLHCNARVVYVEEQQVQDRDPVDLEALLSLSVQYAPFDFYVIELGQGCSLQRIKDYSPSLKANNELIHKLQKLQSLTARQDYLQQQRKNLICSVAQSLQCTHVFEPNISVDLATQLLTAIALGRGASAALDVALLDDRLSGDVKLLRPLKDLSEQEIQFYIHAQRLKPLFQSGSHYGMERGPTASLQNLTSAFVANLQHNYASTVSTVFRTGDKIAVNSDPEQATCVHCQSALDSELSDTLLAIEYSRSVSEAGVSLYKNGQDLESLAKKRLEMQDGLCHACRAIQAELESGNLL</sequence>
<organism>
    <name type="scientific">Drosophila erecta</name>
    <name type="common">Fruit fly</name>
    <dbReference type="NCBI Taxonomy" id="7220"/>
    <lineage>
        <taxon>Eukaryota</taxon>
        <taxon>Metazoa</taxon>
        <taxon>Ecdysozoa</taxon>
        <taxon>Arthropoda</taxon>
        <taxon>Hexapoda</taxon>
        <taxon>Insecta</taxon>
        <taxon>Pterygota</taxon>
        <taxon>Neoptera</taxon>
        <taxon>Endopterygota</taxon>
        <taxon>Diptera</taxon>
        <taxon>Brachycera</taxon>
        <taxon>Muscomorpha</taxon>
        <taxon>Ephydroidea</taxon>
        <taxon>Drosophilidae</taxon>
        <taxon>Drosophila</taxon>
        <taxon>Sophophora</taxon>
    </lineage>
</organism>
<reference key="1">
    <citation type="journal article" date="2007" name="Nature">
        <title>Evolution of genes and genomes on the Drosophila phylogeny.</title>
        <authorList>
            <consortium name="Drosophila 12 genomes consortium"/>
        </authorList>
    </citation>
    <scope>NUCLEOTIDE SEQUENCE [LARGE SCALE GENOMIC DNA]</scope>
    <source>
        <strain>Tucson 14021-0224.01</strain>
    </source>
</reference>
<comment type="function">
    <text evidence="1">Plays a central role in 2-thiolation of mcm(5)S(2)U at tRNA wobble positions of tRNA(Lys), tRNA(Glu) and tRNA(Gln). May act by forming a heterodimer with NCS6/CTU1 that ligates sulfur from thiocarboxylated URM1 onto the uridine of tRNAs at wobble position.</text>
</comment>
<comment type="pathway">
    <text evidence="1">tRNA modification; 5-methoxycarbonylmethyl-2-thiouridine-tRNA biosynthesis.</text>
</comment>
<comment type="subcellular location">
    <subcellularLocation>
        <location evidence="1">Cytoplasm</location>
    </subcellularLocation>
</comment>
<comment type="similarity">
    <text evidence="1">Belongs to the CTU2/NCS2 family.</text>
</comment>
<keyword id="KW-0963">Cytoplasm</keyword>
<keyword id="KW-0819">tRNA processing</keyword>
<feature type="chain" id="PRO_0000369271" description="Cytoplasmic tRNA 2-thiolation protein 2">
    <location>
        <begin position="1"/>
        <end position="404"/>
    </location>
</feature>